<dbReference type="EMBL" id="X90855">
    <property type="protein sequence ID" value="CAA62364.1"/>
    <property type="molecule type" value="Genomic_DNA"/>
</dbReference>
<dbReference type="EMBL" id="AL163818">
    <property type="protein sequence ID" value="CAB87802.1"/>
    <property type="molecule type" value="Genomic_DNA"/>
</dbReference>
<dbReference type="EMBL" id="CP002686">
    <property type="protein sequence ID" value="AEE80492.1"/>
    <property type="molecule type" value="Genomic_DNA"/>
</dbReference>
<dbReference type="EMBL" id="BT001191">
    <property type="protein sequence ID" value="AAN65078.1"/>
    <property type="molecule type" value="mRNA"/>
</dbReference>
<dbReference type="EMBL" id="AY133519">
    <property type="protein sequence ID" value="AAM91349.1"/>
    <property type="molecule type" value="mRNA"/>
</dbReference>
<dbReference type="EMBL" id="AY059929">
    <property type="protein sequence ID" value="AAL24411.1"/>
    <property type="molecule type" value="mRNA"/>
</dbReference>
<dbReference type="EMBL" id="AY053410">
    <property type="protein sequence ID" value="AAK96640.1"/>
    <property type="molecule type" value="mRNA"/>
</dbReference>
<dbReference type="PIR" id="T49190">
    <property type="entry name" value="T49190"/>
</dbReference>
<dbReference type="PIR" id="T51934">
    <property type="entry name" value="T51934"/>
</dbReference>
<dbReference type="RefSeq" id="NP_191908.1">
    <molecule id="Q9LY66-1"/>
    <property type="nucleotide sequence ID" value="NM_116214.3"/>
</dbReference>
<dbReference type="SMR" id="Q9LY66"/>
<dbReference type="BioGRID" id="10838">
    <property type="interactions" value="6"/>
</dbReference>
<dbReference type="FunCoup" id="Q9LY66">
    <property type="interactions" value="1172"/>
</dbReference>
<dbReference type="STRING" id="3702.Q9LY66"/>
<dbReference type="GlyGen" id="Q9LY66">
    <property type="glycosylation" value="1 site"/>
</dbReference>
<dbReference type="iPTMnet" id="Q9LY66"/>
<dbReference type="SwissPalm" id="Q9LY66"/>
<dbReference type="PaxDb" id="3702-AT3G63490.1"/>
<dbReference type="ProteomicsDB" id="234806">
    <molecule id="Q9LY66-1"/>
</dbReference>
<dbReference type="EnsemblPlants" id="AT3G63490.1">
    <molecule id="Q9LY66-1"/>
    <property type="protein sequence ID" value="AT3G63490.1"/>
    <property type="gene ID" value="AT3G63490"/>
</dbReference>
<dbReference type="Gramene" id="AT3G63490.1">
    <molecule id="Q9LY66-1"/>
    <property type="protein sequence ID" value="AT3G63490.1"/>
    <property type="gene ID" value="AT3G63490"/>
</dbReference>
<dbReference type="KEGG" id="ath:AT3G63490"/>
<dbReference type="Araport" id="AT3G63490"/>
<dbReference type="TAIR" id="AT3G63490">
    <property type="gene designation" value="EMB3126"/>
</dbReference>
<dbReference type="eggNOG" id="KOG1569">
    <property type="taxonomic scope" value="Eukaryota"/>
</dbReference>
<dbReference type="HOGENOM" id="CLU_065963_1_0_1"/>
<dbReference type="InParanoid" id="Q9LY66"/>
<dbReference type="OMA" id="DNLEFFH"/>
<dbReference type="PhylomeDB" id="Q9LY66"/>
<dbReference type="CD-CODE" id="4299E36E">
    <property type="entry name" value="Nucleolus"/>
</dbReference>
<dbReference type="PRO" id="PR:Q9LY66"/>
<dbReference type="Proteomes" id="UP000006548">
    <property type="component" value="Chromosome 3"/>
</dbReference>
<dbReference type="ExpressionAtlas" id="Q9LY66">
    <property type="expression patterns" value="baseline and differential"/>
</dbReference>
<dbReference type="GO" id="GO:0009507">
    <property type="term" value="C:chloroplast"/>
    <property type="evidence" value="ECO:0007005"/>
    <property type="project" value="TAIR"/>
</dbReference>
<dbReference type="GO" id="GO:0009941">
    <property type="term" value="C:chloroplast envelope"/>
    <property type="evidence" value="ECO:0007005"/>
    <property type="project" value="TAIR"/>
</dbReference>
<dbReference type="GO" id="GO:0009570">
    <property type="term" value="C:chloroplast stroma"/>
    <property type="evidence" value="ECO:0007005"/>
    <property type="project" value="TAIR"/>
</dbReference>
<dbReference type="GO" id="GO:0009535">
    <property type="term" value="C:chloroplast thylakoid membrane"/>
    <property type="evidence" value="ECO:0007005"/>
    <property type="project" value="TAIR"/>
</dbReference>
<dbReference type="GO" id="GO:0005829">
    <property type="term" value="C:cytosol"/>
    <property type="evidence" value="ECO:0007005"/>
    <property type="project" value="TAIR"/>
</dbReference>
<dbReference type="GO" id="GO:0015934">
    <property type="term" value="C:large ribosomal subunit"/>
    <property type="evidence" value="ECO:0007669"/>
    <property type="project" value="InterPro"/>
</dbReference>
<dbReference type="GO" id="GO:0005634">
    <property type="term" value="C:nucleus"/>
    <property type="evidence" value="ECO:0007005"/>
    <property type="project" value="TAIR"/>
</dbReference>
<dbReference type="GO" id="GO:0003729">
    <property type="term" value="F:mRNA binding"/>
    <property type="evidence" value="ECO:0000314"/>
    <property type="project" value="TAIR"/>
</dbReference>
<dbReference type="GO" id="GO:0019843">
    <property type="term" value="F:rRNA binding"/>
    <property type="evidence" value="ECO:0007669"/>
    <property type="project" value="UniProtKB-KW"/>
</dbReference>
<dbReference type="GO" id="GO:0003735">
    <property type="term" value="F:structural constituent of ribosome"/>
    <property type="evidence" value="ECO:0007669"/>
    <property type="project" value="InterPro"/>
</dbReference>
<dbReference type="GO" id="GO:0006412">
    <property type="term" value="P:translation"/>
    <property type="evidence" value="ECO:0007669"/>
    <property type="project" value="InterPro"/>
</dbReference>
<dbReference type="CDD" id="cd00403">
    <property type="entry name" value="Ribosomal_L1"/>
    <property type="match status" value="1"/>
</dbReference>
<dbReference type="FunFam" id="3.40.50.790:FF:000001">
    <property type="entry name" value="50S ribosomal protein L1"/>
    <property type="match status" value="1"/>
</dbReference>
<dbReference type="Gene3D" id="3.30.190.20">
    <property type="match status" value="1"/>
</dbReference>
<dbReference type="Gene3D" id="3.40.50.790">
    <property type="match status" value="1"/>
</dbReference>
<dbReference type="HAMAP" id="MF_01318_B">
    <property type="entry name" value="Ribosomal_uL1_B"/>
    <property type="match status" value="1"/>
</dbReference>
<dbReference type="InterPro" id="IPR005878">
    <property type="entry name" value="Ribosom_uL1_bac-type"/>
</dbReference>
<dbReference type="InterPro" id="IPR023674">
    <property type="entry name" value="Ribosomal_uL1-like"/>
</dbReference>
<dbReference type="InterPro" id="IPR028364">
    <property type="entry name" value="Ribosomal_uL1/biogenesis"/>
</dbReference>
<dbReference type="InterPro" id="IPR016095">
    <property type="entry name" value="Ribosomal_uL1_3-a/b-sand"/>
</dbReference>
<dbReference type="InterPro" id="IPR023673">
    <property type="entry name" value="Ribosomal_uL1_CS"/>
</dbReference>
<dbReference type="NCBIfam" id="TIGR01169">
    <property type="entry name" value="rplA_bact"/>
    <property type="match status" value="1"/>
</dbReference>
<dbReference type="PANTHER" id="PTHR36427">
    <property type="entry name" value="54S RIBOSOMAL PROTEIN L1, MITOCHONDRIAL"/>
    <property type="match status" value="1"/>
</dbReference>
<dbReference type="PANTHER" id="PTHR36427:SF3">
    <property type="entry name" value="LARGE RIBOSOMAL SUBUNIT PROTEIN UL1M"/>
    <property type="match status" value="1"/>
</dbReference>
<dbReference type="Pfam" id="PF00687">
    <property type="entry name" value="Ribosomal_L1"/>
    <property type="match status" value="1"/>
</dbReference>
<dbReference type="SUPFAM" id="SSF56808">
    <property type="entry name" value="Ribosomal protein L1"/>
    <property type="match status" value="1"/>
</dbReference>
<dbReference type="PROSITE" id="PS01199">
    <property type="entry name" value="RIBOSOMAL_L1"/>
    <property type="match status" value="1"/>
</dbReference>
<proteinExistence type="evidence at protein level"/>
<keyword id="KW-0025">Alternative splicing</keyword>
<keyword id="KW-0150">Chloroplast</keyword>
<keyword id="KW-0597">Phosphoprotein</keyword>
<keyword id="KW-0934">Plastid</keyword>
<keyword id="KW-1185">Reference proteome</keyword>
<keyword id="KW-0687">Ribonucleoprotein</keyword>
<keyword id="KW-0689">Ribosomal protein</keyword>
<keyword id="KW-0694">RNA-binding</keyword>
<keyword id="KW-0699">rRNA-binding</keyword>
<keyword id="KW-0809">Transit peptide</keyword>
<feature type="transit peptide" description="Chloroplast" evidence="3">
    <location>
        <begin position="1"/>
        <end position="70"/>
    </location>
</feature>
<feature type="chain" id="PRO_0000249342" description="Large ribosomal subunit protein uL1c">
    <location>
        <begin position="71"/>
        <end position="346"/>
    </location>
</feature>
<feature type="modified residue" description="Phosphotyrosine" evidence="4">
    <location>
        <position position="129"/>
    </location>
</feature>
<feature type="modified residue" description="Phosphothreonine" evidence="4">
    <location>
        <position position="177"/>
    </location>
</feature>
<feature type="modified residue" description="Phosphoserine" evidence="4">
    <location>
        <position position="197"/>
    </location>
</feature>
<feature type="sequence conflict" description="In Ref. 1; CAA62364." evidence="3" ref="1">
    <original>S</original>
    <variation>A</variation>
    <location>
        <position position="21"/>
    </location>
</feature>
<feature type="sequence conflict" description="In Ref. 1; CAA62364." evidence="3" ref="1">
    <original>F</original>
    <variation>V</variation>
    <location>
        <position position="43"/>
    </location>
</feature>
<name>RK1_ARATH</name>
<accession>Q9LY66</accession>
<accession>Q9LWB4</accession>
<organism>
    <name type="scientific">Arabidopsis thaliana</name>
    <name type="common">Mouse-ear cress</name>
    <dbReference type="NCBI Taxonomy" id="3702"/>
    <lineage>
        <taxon>Eukaryota</taxon>
        <taxon>Viridiplantae</taxon>
        <taxon>Streptophyta</taxon>
        <taxon>Embryophyta</taxon>
        <taxon>Tracheophyta</taxon>
        <taxon>Spermatophyta</taxon>
        <taxon>Magnoliopsida</taxon>
        <taxon>eudicotyledons</taxon>
        <taxon>Gunneridae</taxon>
        <taxon>Pentapetalae</taxon>
        <taxon>rosids</taxon>
        <taxon>malvids</taxon>
        <taxon>Brassicales</taxon>
        <taxon>Brassicaceae</taxon>
        <taxon>Camelineae</taxon>
        <taxon>Arabidopsis</taxon>
    </lineage>
</organism>
<comment type="function">
    <text evidence="1">This protein binds directly to 23S ribosomal RNA.</text>
</comment>
<comment type="subunit">
    <text evidence="1">Part of the 50S ribosomal subunit.</text>
</comment>
<comment type="subcellular location">
    <subcellularLocation>
        <location>Plastid</location>
        <location>Chloroplast</location>
    </subcellularLocation>
</comment>
<comment type="alternative products">
    <event type="alternative splicing"/>
    <isoform>
        <id>Q9LY66-1</id>
        <name>1</name>
        <sequence type="displayed"/>
    </isoform>
    <text>A number of isoforms are produced. According to EST sequences.</text>
</comment>
<comment type="similarity">
    <text evidence="3">Belongs to the universal ribosomal protein uL1 family.</text>
</comment>
<sequence>MAACATHSSLMLAYAAASTRSQDLTPTPSLFSFASSRPNHLSFPLLLLGGSRDRRCAAIDRASNHKFIVSAVAAEADLDTEEDLEQTATAVLDPPKPKKGKAALVLKRDRTRSKRFLEIQKLRETKKEYDVNTAISLLKQTANTRFVESVEAHFRLNIDPKYNDQQLRATVSLPKGTGQTVIVAVLAQGEKVDEAKSAGADIVGSDDLIEQIKGGFMEFDKLIASPDMMVKVAGLGKILGPRGLMPNPKAGTVTANIPQAIEEFKKGKVEFRADKTGIVHIPFGKVNFTEEDLLINFLAAVKSVETNKPKGAKGVYWKSAHICSSMGPSIKLNIREMIDFKPPTAN</sequence>
<evidence type="ECO:0000250" key="1"/>
<evidence type="ECO:0000303" key="2">
    <source>
    </source>
</evidence>
<evidence type="ECO:0000305" key="3"/>
<evidence type="ECO:0007744" key="4">
    <source>
    </source>
</evidence>
<protein>
    <recommendedName>
        <fullName evidence="2">Large ribosomal subunit protein uL1c</fullName>
    </recommendedName>
    <alternativeName>
        <fullName>50S ribosomal protein L1, chloroplastic</fullName>
    </alternativeName>
    <alternativeName>
        <fullName>CL1</fullName>
    </alternativeName>
</protein>
<gene>
    <name type="primary">RPL1</name>
    <name type="ordered locus">At3g63490</name>
    <name type="ORF">MAA21_120</name>
</gene>
<reference key="1">
    <citation type="submission" date="1995-08" db="EMBL/GenBank/DDBJ databases">
        <authorList>
            <person name="Kavousi M."/>
            <person name="Subramanian A.R."/>
        </authorList>
    </citation>
    <scope>NUCLEOTIDE SEQUENCE [GENOMIC DNA]</scope>
    <source>
        <strain>cv. C24</strain>
    </source>
</reference>
<reference key="2">
    <citation type="journal article" date="2000" name="Nature">
        <title>Sequence and analysis of chromosome 3 of the plant Arabidopsis thaliana.</title>
        <authorList>
            <person name="Salanoubat M."/>
            <person name="Lemcke K."/>
            <person name="Rieger M."/>
            <person name="Ansorge W."/>
            <person name="Unseld M."/>
            <person name="Fartmann B."/>
            <person name="Valle G."/>
            <person name="Bloecker H."/>
            <person name="Perez-Alonso M."/>
            <person name="Obermaier B."/>
            <person name="Delseny M."/>
            <person name="Boutry M."/>
            <person name="Grivell L.A."/>
            <person name="Mache R."/>
            <person name="Puigdomenech P."/>
            <person name="De Simone V."/>
            <person name="Choisne N."/>
            <person name="Artiguenave F."/>
            <person name="Robert C."/>
            <person name="Brottier P."/>
            <person name="Wincker P."/>
            <person name="Cattolico L."/>
            <person name="Weissenbach J."/>
            <person name="Saurin W."/>
            <person name="Quetier F."/>
            <person name="Schaefer M."/>
            <person name="Mueller-Auer S."/>
            <person name="Gabel C."/>
            <person name="Fuchs M."/>
            <person name="Benes V."/>
            <person name="Wurmbach E."/>
            <person name="Drzonek H."/>
            <person name="Erfle H."/>
            <person name="Jordan N."/>
            <person name="Bangert S."/>
            <person name="Wiedelmann R."/>
            <person name="Kranz H."/>
            <person name="Voss H."/>
            <person name="Holland R."/>
            <person name="Brandt P."/>
            <person name="Nyakatura G."/>
            <person name="Vezzi A."/>
            <person name="D'Angelo M."/>
            <person name="Pallavicini A."/>
            <person name="Toppo S."/>
            <person name="Simionati B."/>
            <person name="Conrad A."/>
            <person name="Hornischer K."/>
            <person name="Kauer G."/>
            <person name="Loehnert T.-H."/>
            <person name="Nordsiek G."/>
            <person name="Reichelt J."/>
            <person name="Scharfe M."/>
            <person name="Schoen O."/>
            <person name="Bargues M."/>
            <person name="Terol J."/>
            <person name="Climent J."/>
            <person name="Navarro P."/>
            <person name="Collado C."/>
            <person name="Perez-Perez A."/>
            <person name="Ottenwaelder B."/>
            <person name="Duchemin D."/>
            <person name="Cooke R."/>
            <person name="Laudie M."/>
            <person name="Berger-Llauro C."/>
            <person name="Purnelle B."/>
            <person name="Masuy D."/>
            <person name="de Haan M."/>
            <person name="Maarse A.C."/>
            <person name="Alcaraz J.-P."/>
            <person name="Cottet A."/>
            <person name="Casacuberta E."/>
            <person name="Monfort A."/>
            <person name="Argiriou A."/>
            <person name="Flores M."/>
            <person name="Liguori R."/>
            <person name="Vitale D."/>
            <person name="Mannhaupt G."/>
            <person name="Haase D."/>
            <person name="Schoof H."/>
            <person name="Rudd S."/>
            <person name="Zaccaria P."/>
            <person name="Mewes H.-W."/>
            <person name="Mayer K.F.X."/>
            <person name="Kaul S."/>
            <person name="Town C.D."/>
            <person name="Koo H.L."/>
            <person name="Tallon L.J."/>
            <person name="Jenkins J."/>
            <person name="Rooney T."/>
            <person name="Rizzo M."/>
            <person name="Walts A."/>
            <person name="Utterback T."/>
            <person name="Fujii C.Y."/>
            <person name="Shea T.P."/>
            <person name="Creasy T.H."/>
            <person name="Haas B."/>
            <person name="Maiti R."/>
            <person name="Wu D."/>
            <person name="Peterson J."/>
            <person name="Van Aken S."/>
            <person name="Pai G."/>
            <person name="Militscher J."/>
            <person name="Sellers P."/>
            <person name="Gill J.E."/>
            <person name="Feldblyum T.V."/>
            <person name="Preuss D."/>
            <person name="Lin X."/>
            <person name="Nierman W.C."/>
            <person name="Salzberg S.L."/>
            <person name="White O."/>
            <person name="Venter J.C."/>
            <person name="Fraser C.M."/>
            <person name="Kaneko T."/>
            <person name="Nakamura Y."/>
            <person name="Sato S."/>
            <person name="Kato T."/>
            <person name="Asamizu E."/>
            <person name="Sasamoto S."/>
            <person name="Kimura T."/>
            <person name="Idesawa K."/>
            <person name="Kawashima K."/>
            <person name="Kishida Y."/>
            <person name="Kiyokawa C."/>
            <person name="Kohara M."/>
            <person name="Matsumoto M."/>
            <person name="Matsuno A."/>
            <person name="Muraki A."/>
            <person name="Nakayama S."/>
            <person name="Nakazaki N."/>
            <person name="Shinpo S."/>
            <person name="Takeuchi C."/>
            <person name="Wada T."/>
            <person name="Watanabe A."/>
            <person name="Yamada M."/>
            <person name="Yasuda M."/>
            <person name="Tabata S."/>
        </authorList>
    </citation>
    <scope>NUCLEOTIDE SEQUENCE [LARGE SCALE GENOMIC DNA]</scope>
    <source>
        <strain>cv. Columbia</strain>
    </source>
</reference>
<reference key="3">
    <citation type="journal article" date="2017" name="Plant J.">
        <title>Araport11: a complete reannotation of the Arabidopsis thaliana reference genome.</title>
        <authorList>
            <person name="Cheng C.Y."/>
            <person name="Krishnakumar V."/>
            <person name="Chan A.P."/>
            <person name="Thibaud-Nissen F."/>
            <person name="Schobel S."/>
            <person name="Town C.D."/>
        </authorList>
    </citation>
    <scope>GENOME REANNOTATION</scope>
    <source>
        <strain>cv. Columbia</strain>
    </source>
</reference>
<reference key="4">
    <citation type="journal article" date="2003" name="Science">
        <title>Empirical analysis of transcriptional activity in the Arabidopsis genome.</title>
        <authorList>
            <person name="Yamada K."/>
            <person name="Lim J."/>
            <person name="Dale J.M."/>
            <person name="Chen H."/>
            <person name="Shinn P."/>
            <person name="Palm C.J."/>
            <person name="Southwick A.M."/>
            <person name="Wu H.C."/>
            <person name="Kim C.J."/>
            <person name="Nguyen M."/>
            <person name="Pham P.K."/>
            <person name="Cheuk R.F."/>
            <person name="Karlin-Newmann G."/>
            <person name="Liu S.X."/>
            <person name="Lam B."/>
            <person name="Sakano H."/>
            <person name="Wu T."/>
            <person name="Yu G."/>
            <person name="Miranda M."/>
            <person name="Quach H.L."/>
            <person name="Tripp M."/>
            <person name="Chang C.H."/>
            <person name="Lee J.M."/>
            <person name="Toriumi M.J."/>
            <person name="Chan M.M."/>
            <person name="Tang C.C."/>
            <person name="Onodera C.S."/>
            <person name="Deng J.M."/>
            <person name="Akiyama K."/>
            <person name="Ansari Y."/>
            <person name="Arakawa T."/>
            <person name="Banh J."/>
            <person name="Banno F."/>
            <person name="Bowser L."/>
            <person name="Brooks S.Y."/>
            <person name="Carninci P."/>
            <person name="Chao Q."/>
            <person name="Choy N."/>
            <person name="Enju A."/>
            <person name="Goldsmith A.D."/>
            <person name="Gurjal M."/>
            <person name="Hansen N.F."/>
            <person name="Hayashizaki Y."/>
            <person name="Johnson-Hopson C."/>
            <person name="Hsuan V.W."/>
            <person name="Iida K."/>
            <person name="Karnes M."/>
            <person name="Khan S."/>
            <person name="Koesema E."/>
            <person name="Ishida J."/>
            <person name="Jiang P.X."/>
            <person name="Jones T."/>
            <person name="Kawai J."/>
            <person name="Kamiya A."/>
            <person name="Meyers C."/>
            <person name="Nakajima M."/>
            <person name="Narusaka M."/>
            <person name="Seki M."/>
            <person name="Sakurai T."/>
            <person name="Satou M."/>
            <person name="Tamse R."/>
            <person name="Vaysberg M."/>
            <person name="Wallender E.K."/>
            <person name="Wong C."/>
            <person name="Yamamura Y."/>
            <person name="Yuan S."/>
            <person name="Shinozaki K."/>
            <person name="Davis R.W."/>
            <person name="Theologis A."/>
            <person name="Ecker J.R."/>
        </authorList>
    </citation>
    <scope>NUCLEOTIDE SEQUENCE [LARGE SCALE MRNA]</scope>
    <source>
        <strain>cv. Columbia</strain>
    </source>
</reference>
<reference key="5">
    <citation type="journal article" date="2012" name="J. Proteome Res.">
        <title>Identification of phosphoproteins in Arabidopsis thaliana leaves using polyethylene glycol fractionation, immobilized metal-ion affinity chromatography, two-dimensional gel electrophoresis and mass spectrometry.</title>
        <authorList>
            <person name="Aryal U.K."/>
            <person name="Krochko J.E."/>
            <person name="Ross A.R."/>
        </authorList>
    </citation>
    <scope>PHOSPHORYLATION [LARGE SCALE ANALYSIS] AT TYR-129; THR-177 AND SER-197</scope>
    <scope>IDENTIFICATION BY MASS SPECTROMETRY [LARGE SCALE ANALYSIS]</scope>
</reference>
<reference key="6">
    <citation type="journal article" date="2023" name="Plant Cell">
        <title>An updated nomenclature for plant ribosomal protein genes.</title>
        <authorList>
            <person name="Scarpin M.R."/>
            <person name="Busche M."/>
            <person name="Martinez R.E."/>
            <person name="Harper L.C."/>
            <person name="Reiser L."/>
            <person name="Szakonyi D."/>
            <person name="Merchante C."/>
            <person name="Lan T."/>
            <person name="Xiong W."/>
            <person name="Mo B."/>
            <person name="Tang G."/>
            <person name="Chen X."/>
            <person name="Bailey-Serres J."/>
            <person name="Browning K.S."/>
            <person name="Brunkard J.O."/>
        </authorList>
    </citation>
    <scope>NOMENCLATURE</scope>
</reference>